<accession>Q920A5</accession>
<accession>Q9D625</accession>
<proteinExistence type="evidence at protein level"/>
<organism>
    <name type="scientific">Mus musculus</name>
    <name type="common">Mouse</name>
    <dbReference type="NCBI Taxonomy" id="10090"/>
    <lineage>
        <taxon>Eukaryota</taxon>
        <taxon>Metazoa</taxon>
        <taxon>Chordata</taxon>
        <taxon>Craniata</taxon>
        <taxon>Vertebrata</taxon>
        <taxon>Euteleostomi</taxon>
        <taxon>Mammalia</taxon>
        <taxon>Eutheria</taxon>
        <taxon>Euarchontoglires</taxon>
        <taxon>Glires</taxon>
        <taxon>Rodentia</taxon>
        <taxon>Myomorpha</taxon>
        <taxon>Muroidea</taxon>
        <taxon>Muridae</taxon>
        <taxon>Murinae</taxon>
        <taxon>Mus</taxon>
        <taxon>Mus</taxon>
    </lineage>
</organism>
<protein>
    <recommendedName>
        <fullName>Retinoid-inducible serine carboxypeptidase</fullName>
        <ecNumber>3.4.16.-</ecNumber>
    </recommendedName>
    <alternativeName>
        <fullName>Serine carboxypeptidase 1</fullName>
    </alternativeName>
</protein>
<sequence length="452" mass="50965">MELSRRICLVRLWLLLLSFLLGFSAGSAIDWREPEGKEVWDYVTVRKDAHMFWWLYYATNPCKNFSELPLVMWLQGGPGGSSTGFGNFEEIGPLDTQLKPRNTTWLQWASLLFVDNPVGTGFSYVNTTDAYAKDLDTVASDMMVLLKSFFDCHKEFQTVPFYIFSESYGGKMAAGISVELYKAVQQGTIKCNFSGVALGDSWISPVDSVLSWGPYLYSMSLLDNQGLAEVSDIAEQVLDAVNKGFYKEATQLWGKAEMIIEKNTDGVNFYNILTKSSPEKAMESSLEFLRSPLVRLCQRHVRHLQGDALSQLMNGPIKKKLKIIPEDISWGAQASYVFLSMEGDFMKPAIDVVDKLLAAGVNVTVYNGQLDLIVDTIGQESWVQKLKWPQLSKFNQLKWKALYTDPKSSETAAFVKSYENLAFYWILKAGHMVPSDQGEMALKMMKLVTKQE</sequence>
<reference key="1">
    <citation type="journal article" date="2001" name="J. Biol. Chem.">
        <title>Cloning of a novel retinoid-inducible serine carboxypeptidase from vascular smooth muscle cells.</title>
        <authorList>
            <person name="Chen J."/>
            <person name="Streb J.W."/>
            <person name="Maltby K.M."/>
            <person name="Kitchen C.M."/>
            <person name="Miano J.M."/>
        </authorList>
    </citation>
    <scope>NUCLEOTIDE SEQUENCE [MRNA]</scope>
</reference>
<reference key="2">
    <citation type="journal article" date="2005" name="Science">
        <title>The transcriptional landscape of the mammalian genome.</title>
        <authorList>
            <person name="Carninci P."/>
            <person name="Kasukawa T."/>
            <person name="Katayama S."/>
            <person name="Gough J."/>
            <person name="Frith M.C."/>
            <person name="Maeda N."/>
            <person name="Oyama R."/>
            <person name="Ravasi T."/>
            <person name="Lenhard B."/>
            <person name="Wells C."/>
            <person name="Kodzius R."/>
            <person name="Shimokawa K."/>
            <person name="Bajic V.B."/>
            <person name="Brenner S.E."/>
            <person name="Batalov S."/>
            <person name="Forrest A.R."/>
            <person name="Zavolan M."/>
            <person name="Davis M.J."/>
            <person name="Wilming L.G."/>
            <person name="Aidinis V."/>
            <person name="Allen J.E."/>
            <person name="Ambesi-Impiombato A."/>
            <person name="Apweiler R."/>
            <person name="Aturaliya R.N."/>
            <person name="Bailey T.L."/>
            <person name="Bansal M."/>
            <person name="Baxter L."/>
            <person name="Beisel K.W."/>
            <person name="Bersano T."/>
            <person name="Bono H."/>
            <person name="Chalk A.M."/>
            <person name="Chiu K.P."/>
            <person name="Choudhary V."/>
            <person name="Christoffels A."/>
            <person name="Clutterbuck D.R."/>
            <person name="Crowe M.L."/>
            <person name="Dalla E."/>
            <person name="Dalrymple B.P."/>
            <person name="de Bono B."/>
            <person name="Della Gatta G."/>
            <person name="di Bernardo D."/>
            <person name="Down T."/>
            <person name="Engstrom P."/>
            <person name="Fagiolini M."/>
            <person name="Faulkner G."/>
            <person name="Fletcher C.F."/>
            <person name="Fukushima T."/>
            <person name="Furuno M."/>
            <person name="Futaki S."/>
            <person name="Gariboldi M."/>
            <person name="Georgii-Hemming P."/>
            <person name="Gingeras T.R."/>
            <person name="Gojobori T."/>
            <person name="Green R.E."/>
            <person name="Gustincich S."/>
            <person name="Harbers M."/>
            <person name="Hayashi Y."/>
            <person name="Hensch T.K."/>
            <person name="Hirokawa N."/>
            <person name="Hill D."/>
            <person name="Huminiecki L."/>
            <person name="Iacono M."/>
            <person name="Ikeo K."/>
            <person name="Iwama A."/>
            <person name="Ishikawa T."/>
            <person name="Jakt M."/>
            <person name="Kanapin A."/>
            <person name="Katoh M."/>
            <person name="Kawasawa Y."/>
            <person name="Kelso J."/>
            <person name="Kitamura H."/>
            <person name="Kitano H."/>
            <person name="Kollias G."/>
            <person name="Krishnan S.P."/>
            <person name="Kruger A."/>
            <person name="Kummerfeld S.K."/>
            <person name="Kurochkin I.V."/>
            <person name="Lareau L.F."/>
            <person name="Lazarevic D."/>
            <person name="Lipovich L."/>
            <person name="Liu J."/>
            <person name="Liuni S."/>
            <person name="McWilliam S."/>
            <person name="Madan Babu M."/>
            <person name="Madera M."/>
            <person name="Marchionni L."/>
            <person name="Matsuda H."/>
            <person name="Matsuzawa S."/>
            <person name="Miki H."/>
            <person name="Mignone F."/>
            <person name="Miyake S."/>
            <person name="Morris K."/>
            <person name="Mottagui-Tabar S."/>
            <person name="Mulder N."/>
            <person name="Nakano N."/>
            <person name="Nakauchi H."/>
            <person name="Ng P."/>
            <person name="Nilsson R."/>
            <person name="Nishiguchi S."/>
            <person name="Nishikawa S."/>
            <person name="Nori F."/>
            <person name="Ohara O."/>
            <person name="Okazaki Y."/>
            <person name="Orlando V."/>
            <person name="Pang K.C."/>
            <person name="Pavan W.J."/>
            <person name="Pavesi G."/>
            <person name="Pesole G."/>
            <person name="Petrovsky N."/>
            <person name="Piazza S."/>
            <person name="Reed J."/>
            <person name="Reid J.F."/>
            <person name="Ring B.Z."/>
            <person name="Ringwald M."/>
            <person name="Rost B."/>
            <person name="Ruan Y."/>
            <person name="Salzberg S.L."/>
            <person name="Sandelin A."/>
            <person name="Schneider C."/>
            <person name="Schoenbach C."/>
            <person name="Sekiguchi K."/>
            <person name="Semple C.A."/>
            <person name="Seno S."/>
            <person name="Sessa L."/>
            <person name="Sheng Y."/>
            <person name="Shibata Y."/>
            <person name="Shimada H."/>
            <person name="Shimada K."/>
            <person name="Silva D."/>
            <person name="Sinclair B."/>
            <person name="Sperling S."/>
            <person name="Stupka E."/>
            <person name="Sugiura K."/>
            <person name="Sultana R."/>
            <person name="Takenaka Y."/>
            <person name="Taki K."/>
            <person name="Tammoja K."/>
            <person name="Tan S.L."/>
            <person name="Tang S."/>
            <person name="Taylor M.S."/>
            <person name="Tegner J."/>
            <person name="Teichmann S.A."/>
            <person name="Ueda H.R."/>
            <person name="van Nimwegen E."/>
            <person name="Verardo R."/>
            <person name="Wei C.L."/>
            <person name="Yagi K."/>
            <person name="Yamanishi H."/>
            <person name="Zabarovsky E."/>
            <person name="Zhu S."/>
            <person name="Zimmer A."/>
            <person name="Hide W."/>
            <person name="Bult C."/>
            <person name="Grimmond S.M."/>
            <person name="Teasdale R.D."/>
            <person name="Liu E.T."/>
            <person name="Brusic V."/>
            <person name="Quackenbush J."/>
            <person name="Wahlestedt C."/>
            <person name="Mattick J.S."/>
            <person name="Hume D.A."/>
            <person name="Kai C."/>
            <person name="Sasaki D."/>
            <person name="Tomaru Y."/>
            <person name="Fukuda S."/>
            <person name="Kanamori-Katayama M."/>
            <person name="Suzuki M."/>
            <person name="Aoki J."/>
            <person name="Arakawa T."/>
            <person name="Iida J."/>
            <person name="Imamura K."/>
            <person name="Itoh M."/>
            <person name="Kato T."/>
            <person name="Kawaji H."/>
            <person name="Kawagashira N."/>
            <person name="Kawashima T."/>
            <person name="Kojima M."/>
            <person name="Kondo S."/>
            <person name="Konno H."/>
            <person name="Nakano K."/>
            <person name="Ninomiya N."/>
            <person name="Nishio T."/>
            <person name="Okada M."/>
            <person name="Plessy C."/>
            <person name="Shibata K."/>
            <person name="Shiraki T."/>
            <person name="Suzuki S."/>
            <person name="Tagami M."/>
            <person name="Waki K."/>
            <person name="Watahiki A."/>
            <person name="Okamura-Oho Y."/>
            <person name="Suzuki H."/>
            <person name="Kawai J."/>
            <person name="Hayashizaki Y."/>
        </authorList>
    </citation>
    <scope>NUCLEOTIDE SEQUENCE [LARGE SCALE MRNA]</scope>
    <source>
        <strain>C57BL/6J</strain>
        <tissue>Bone marrow</tissue>
        <tissue>Head</tissue>
        <tissue>Liver</tissue>
    </source>
</reference>
<reference key="3">
    <citation type="journal article" date="2009" name="PLoS Biol.">
        <title>Lineage-specific biology revealed by a finished genome assembly of the mouse.</title>
        <authorList>
            <person name="Church D.M."/>
            <person name="Goodstadt L."/>
            <person name="Hillier L.W."/>
            <person name="Zody M.C."/>
            <person name="Goldstein S."/>
            <person name="She X."/>
            <person name="Bult C.J."/>
            <person name="Agarwala R."/>
            <person name="Cherry J.L."/>
            <person name="DiCuccio M."/>
            <person name="Hlavina W."/>
            <person name="Kapustin Y."/>
            <person name="Meric P."/>
            <person name="Maglott D."/>
            <person name="Birtle Z."/>
            <person name="Marques A.C."/>
            <person name="Graves T."/>
            <person name="Zhou S."/>
            <person name="Teague B."/>
            <person name="Potamousis K."/>
            <person name="Churas C."/>
            <person name="Place M."/>
            <person name="Herschleb J."/>
            <person name="Runnheim R."/>
            <person name="Forrest D."/>
            <person name="Amos-Landgraf J."/>
            <person name="Schwartz D.C."/>
            <person name="Cheng Z."/>
            <person name="Lindblad-Toh K."/>
            <person name="Eichler E.E."/>
            <person name="Ponting C.P."/>
        </authorList>
    </citation>
    <scope>NUCLEOTIDE SEQUENCE [LARGE SCALE GENOMIC DNA]</scope>
    <source>
        <strain>C57BL/6J</strain>
    </source>
</reference>
<reference key="4">
    <citation type="journal article" date="2010" name="Cell">
        <title>A tissue-specific atlas of mouse protein phosphorylation and expression.</title>
        <authorList>
            <person name="Huttlin E.L."/>
            <person name="Jedrychowski M.P."/>
            <person name="Elias J.E."/>
            <person name="Goswami T."/>
            <person name="Rad R."/>
            <person name="Beausoleil S.A."/>
            <person name="Villen J."/>
            <person name="Haas W."/>
            <person name="Sowa M.E."/>
            <person name="Gygi S.P."/>
        </authorList>
    </citation>
    <scope>IDENTIFICATION BY MASS SPECTROMETRY [LARGE SCALE ANALYSIS]</scope>
    <source>
        <tissue>Brain</tissue>
        <tissue>Brown adipose tissue</tissue>
        <tissue>Heart</tissue>
        <tissue>Kidney</tissue>
        <tissue>Liver</tissue>
        <tissue>Lung</tissue>
        <tissue>Pancreas</tissue>
        <tissue>Spleen</tissue>
        <tissue>Testis</tissue>
    </source>
</reference>
<name>RISC_MOUSE</name>
<gene>
    <name type="primary">Scpep1</name>
    <name type="synonym">Risc</name>
</gene>
<keyword id="KW-0121">Carboxypeptidase</keyword>
<keyword id="KW-0325">Glycoprotein</keyword>
<keyword id="KW-0378">Hydrolase</keyword>
<keyword id="KW-0645">Protease</keyword>
<keyword id="KW-1185">Reference proteome</keyword>
<keyword id="KW-0964">Secreted</keyword>
<keyword id="KW-0732">Signal</keyword>
<evidence type="ECO:0000255" key="1"/>
<evidence type="ECO:0000255" key="2">
    <source>
        <dbReference type="PROSITE-ProRule" id="PRU10074"/>
    </source>
</evidence>
<evidence type="ECO:0000305" key="3"/>
<dbReference type="EC" id="3.4.16.-"/>
<dbReference type="EMBL" id="AF330052">
    <property type="protein sequence ID" value="AAK84662.1"/>
    <property type="molecule type" value="mRNA"/>
</dbReference>
<dbReference type="EMBL" id="AK014680">
    <property type="protein sequence ID" value="BAB29501.1"/>
    <property type="molecule type" value="mRNA"/>
</dbReference>
<dbReference type="EMBL" id="AK050181">
    <property type="protein sequence ID" value="BAC34111.1"/>
    <property type="molecule type" value="mRNA"/>
</dbReference>
<dbReference type="EMBL" id="AK153225">
    <property type="protein sequence ID" value="BAE31818.1"/>
    <property type="molecule type" value="mRNA"/>
</dbReference>
<dbReference type="EMBL" id="AL646096">
    <property type="status" value="NOT_ANNOTATED_CDS"/>
    <property type="molecule type" value="Genomic_DNA"/>
</dbReference>
<dbReference type="EMBL" id="AL929426">
    <property type="status" value="NOT_ANNOTATED_CDS"/>
    <property type="molecule type" value="Genomic_DNA"/>
</dbReference>
<dbReference type="CCDS" id="CCDS25230.1"/>
<dbReference type="RefSeq" id="NP_083299.3">
    <property type="nucleotide sequence ID" value="NM_029023.3"/>
</dbReference>
<dbReference type="SMR" id="Q920A5"/>
<dbReference type="BioGRID" id="216886">
    <property type="interactions" value="10"/>
</dbReference>
<dbReference type="FunCoup" id="Q920A5">
    <property type="interactions" value="584"/>
</dbReference>
<dbReference type="STRING" id="10090.ENSMUSP00000000287"/>
<dbReference type="ChEMBL" id="CHEMBL3259511"/>
<dbReference type="ESTHER" id="mouse-RISC">
    <property type="family name" value="Carboxypeptidase_S10"/>
</dbReference>
<dbReference type="MEROPS" id="S10.013"/>
<dbReference type="GlyCosmos" id="Q920A5">
    <property type="glycosylation" value="5 sites, No reported glycans"/>
</dbReference>
<dbReference type="GlyGen" id="Q920A5">
    <property type="glycosylation" value="6 sites, 1 O-linked glycan (1 site)"/>
</dbReference>
<dbReference type="iPTMnet" id="Q920A5"/>
<dbReference type="PhosphoSitePlus" id="Q920A5"/>
<dbReference type="SwissPalm" id="Q920A5"/>
<dbReference type="jPOST" id="Q920A5"/>
<dbReference type="PaxDb" id="10090-ENSMUSP00000000287"/>
<dbReference type="PeptideAtlas" id="Q920A5"/>
<dbReference type="ProteomicsDB" id="253295"/>
<dbReference type="Pumba" id="Q920A5"/>
<dbReference type="Antibodypedia" id="30882">
    <property type="antibodies" value="113 antibodies from 21 providers"/>
</dbReference>
<dbReference type="DNASU" id="74617"/>
<dbReference type="Ensembl" id="ENSMUST00000000287.9">
    <property type="protein sequence ID" value="ENSMUSP00000000287.9"/>
    <property type="gene ID" value="ENSMUSG00000000278.11"/>
</dbReference>
<dbReference type="GeneID" id="74617"/>
<dbReference type="KEGG" id="mmu:74617"/>
<dbReference type="UCSC" id="uc007kvx.2">
    <property type="organism name" value="mouse"/>
</dbReference>
<dbReference type="AGR" id="MGI:1921867"/>
<dbReference type="CTD" id="59342"/>
<dbReference type="MGI" id="MGI:1921867">
    <property type="gene designation" value="Scpep1"/>
</dbReference>
<dbReference type="VEuPathDB" id="HostDB:ENSMUSG00000000278"/>
<dbReference type="eggNOG" id="KOG1283">
    <property type="taxonomic scope" value="Eukaryota"/>
</dbReference>
<dbReference type="GeneTree" id="ENSGT00940000156193"/>
<dbReference type="HOGENOM" id="CLU_008523_1_0_1"/>
<dbReference type="InParanoid" id="Q920A5"/>
<dbReference type="OMA" id="QEPKEVW"/>
<dbReference type="OrthoDB" id="443318at2759"/>
<dbReference type="PhylomeDB" id="Q920A5"/>
<dbReference type="TreeFam" id="TF313740"/>
<dbReference type="BRENDA" id="3.4.16.5">
    <property type="organism ID" value="3474"/>
</dbReference>
<dbReference type="BioGRID-ORCS" id="74617">
    <property type="hits" value="5 hits in 77 CRISPR screens"/>
</dbReference>
<dbReference type="ChiTaRS" id="Scpep1">
    <property type="organism name" value="mouse"/>
</dbReference>
<dbReference type="PRO" id="PR:Q920A5"/>
<dbReference type="Proteomes" id="UP000000589">
    <property type="component" value="Chromosome 11"/>
</dbReference>
<dbReference type="RNAct" id="Q920A5">
    <property type="molecule type" value="protein"/>
</dbReference>
<dbReference type="Bgee" id="ENSMUSG00000000278">
    <property type="expression patterns" value="Expressed in decidua and 267 other cell types or tissues"/>
</dbReference>
<dbReference type="GO" id="GO:0005576">
    <property type="term" value="C:extracellular region"/>
    <property type="evidence" value="ECO:0007669"/>
    <property type="project" value="UniProtKB-SubCell"/>
</dbReference>
<dbReference type="GO" id="GO:0004185">
    <property type="term" value="F:serine-type carboxypeptidase activity"/>
    <property type="evidence" value="ECO:0000314"/>
    <property type="project" value="UniProtKB"/>
</dbReference>
<dbReference type="GO" id="GO:0097746">
    <property type="term" value="P:blood vessel diameter maintenance"/>
    <property type="evidence" value="ECO:0000316"/>
    <property type="project" value="GO_Central"/>
</dbReference>
<dbReference type="GO" id="GO:0045776">
    <property type="term" value="P:negative regulation of blood pressure"/>
    <property type="evidence" value="ECO:0000316"/>
    <property type="project" value="UniProtKB"/>
</dbReference>
<dbReference type="GO" id="GO:0006508">
    <property type="term" value="P:proteolysis"/>
    <property type="evidence" value="ECO:0007669"/>
    <property type="project" value="UniProtKB-KW"/>
</dbReference>
<dbReference type="FunFam" id="3.40.50.1820:FF:000075">
    <property type="entry name" value="Carboxypeptidase"/>
    <property type="match status" value="1"/>
</dbReference>
<dbReference type="Gene3D" id="3.40.50.1820">
    <property type="entry name" value="alpha/beta hydrolase"/>
    <property type="match status" value="1"/>
</dbReference>
<dbReference type="InterPro" id="IPR029058">
    <property type="entry name" value="AB_hydrolase_fold"/>
</dbReference>
<dbReference type="InterPro" id="IPR001563">
    <property type="entry name" value="Peptidase_S10"/>
</dbReference>
<dbReference type="InterPro" id="IPR018202">
    <property type="entry name" value="Ser_caboxypep_ser_AS"/>
</dbReference>
<dbReference type="PANTHER" id="PTHR11802:SF3">
    <property type="entry name" value="RETINOID-INDUCIBLE SERINE CARBOXYPEPTIDASE"/>
    <property type="match status" value="1"/>
</dbReference>
<dbReference type="PANTHER" id="PTHR11802">
    <property type="entry name" value="SERINE PROTEASE FAMILY S10 SERINE CARBOXYPEPTIDASE"/>
    <property type="match status" value="1"/>
</dbReference>
<dbReference type="Pfam" id="PF00450">
    <property type="entry name" value="Peptidase_S10"/>
    <property type="match status" value="1"/>
</dbReference>
<dbReference type="PRINTS" id="PR00724">
    <property type="entry name" value="CRBOXYPTASEC"/>
</dbReference>
<dbReference type="SUPFAM" id="SSF53474">
    <property type="entry name" value="alpha/beta-Hydrolases"/>
    <property type="match status" value="1"/>
</dbReference>
<dbReference type="PROSITE" id="PS00131">
    <property type="entry name" value="CARBOXYPEPT_SER_SER"/>
    <property type="match status" value="1"/>
</dbReference>
<comment type="function">
    <text>May be involved in vascular wall and kidney homeostasis.</text>
</comment>
<comment type="subcellular location">
    <subcellularLocation>
        <location evidence="3">Secreted</location>
    </subcellularLocation>
</comment>
<comment type="similarity">
    <text evidence="3">Belongs to the peptidase S10 family.</text>
</comment>
<feature type="signal peptide" evidence="1">
    <location>
        <begin position="1"/>
        <end position="28"/>
    </location>
</feature>
<feature type="chain" id="PRO_0000004285" description="Retinoid-inducible serine carboxypeptidase">
    <location>
        <begin position="29"/>
        <end position="452"/>
    </location>
</feature>
<feature type="active site" evidence="2">
    <location>
        <position position="167"/>
    </location>
</feature>
<feature type="active site" evidence="2">
    <location>
        <position position="371"/>
    </location>
</feature>
<feature type="active site" evidence="2">
    <location>
        <position position="431"/>
    </location>
</feature>
<feature type="glycosylation site" description="N-linked (GlcNAc...) asparagine" evidence="1">
    <location>
        <position position="64"/>
    </location>
</feature>
<feature type="glycosylation site" description="N-linked (GlcNAc...) asparagine" evidence="1">
    <location>
        <position position="102"/>
    </location>
</feature>
<feature type="glycosylation site" description="N-linked (GlcNAc...) asparagine" evidence="1">
    <location>
        <position position="126"/>
    </location>
</feature>
<feature type="glycosylation site" description="N-linked (GlcNAc...) asparagine" evidence="1">
    <location>
        <position position="192"/>
    </location>
</feature>
<feature type="glycosylation site" description="N-linked (GlcNAc...) asparagine" evidence="1">
    <location>
        <position position="362"/>
    </location>
</feature>
<feature type="sequence conflict" description="In Ref. 1; AAK84662." evidence="3" ref="1">
    <original>E</original>
    <variation>M</variation>
    <location>
        <position position="229"/>
    </location>
</feature>